<comment type="catalytic activity">
    <reaction evidence="1">
        <text>urea + 2 H2O + H(+) = hydrogencarbonate + 2 NH4(+)</text>
        <dbReference type="Rhea" id="RHEA:20557"/>
        <dbReference type="ChEBI" id="CHEBI:15377"/>
        <dbReference type="ChEBI" id="CHEBI:15378"/>
        <dbReference type="ChEBI" id="CHEBI:16199"/>
        <dbReference type="ChEBI" id="CHEBI:17544"/>
        <dbReference type="ChEBI" id="CHEBI:28938"/>
        <dbReference type="EC" id="3.5.1.5"/>
    </reaction>
</comment>
<comment type="pathway">
    <text evidence="1">Nitrogen metabolism; urea degradation; CO(2) and NH(3) from urea (urease route): step 1/1.</text>
</comment>
<comment type="subunit">
    <text evidence="1">Heterotrimer of UreA (gamma), UreB (beta) and UreC (alpha) subunits. Three heterotrimers associate to form the active enzyme.</text>
</comment>
<comment type="subcellular location">
    <subcellularLocation>
        <location evidence="1">Cytoplasm</location>
    </subcellularLocation>
</comment>
<comment type="similarity">
    <text evidence="1">Belongs to the urease gamma subunit family.</text>
</comment>
<reference key="1">
    <citation type="journal article" date="2007" name="PLoS Genet.">
        <title>Patterns and implications of gene gain and loss in the evolution of Prochlorococcus.</title>
        <authorList>
            <person name="Kettler G.C."/>
            <person name="Martiny A.C."/>
            <person name="Huang K."/>
            <person name="Zucker J."/>
            <person name="Coleman M.L."/>
            <person name="Rodrigue S."/>
            <person name="Chen F."/>
            <person name="Lapidus A."/>
            <person name="Ferriera S."/>
            <person name="Johnson J."/>
            <person name="Steglich C."/>
            <person name="Church G.M."/>
            <person name="Richardson P."/>
            <person name="Chisholm S.W."/>
        </authorList>
    </citation>
    <scope>NUCLEOTIDE SEQUENCE [LARGE SCALE GENOMIC DNA]</scope>
    <source>
        <strain>NATL1A</strain>
    </source>
</reference>
<organism>
    <name type="scientific">Prochlorococcus marinus (strain NATL1A)</name>
    <dbReference type="NCBI Taxonomy" id="167555"/>
    <lineage>
        <taxon>Bacteria</taxon>
        <taxon>Bacillati</taxon>
        <taxon>Cyanobacteriota</taxon>
        <taxon>Cyanophyceae</taxon>
        <taxon>Synechococcales</taxon>
        <taxon>Prochlorococcaceae</taxon>
        <taxon>Prochlorococcus</taxon>
    </lineage>
</organism>
<gene>
    <name evidence="1" type="primary">ureA</name>
    <name type="ordered locus">NATL1_19241</name>
</gene>
<sequence>MYLSPQEKDKLLVVTAALLAERRLNRGLKLNHPEAVAWLSFQVLEGARDGKSVSTLMNEGTRWLTKEQVMEGVPELIHEVQIEAVFPDGTKLVTLHNPIR</sequence>
<name>URE3_PROM1</name>
<feature type="chain" id="PRO_1000046349" description="Urease subunit gamma">
    <location>
        <begin position="1"/>
        <end position="100"/>
    </location>
</feature>
<keyword id="KW-0963">Cytoplasm</keyword>
<keyword id="KW-0378">Hydrolase</keyword>
<dbReference type="EC" id="3.5.1.5" evidence="1"/>
<dbReference type="EMBL" id="CP000553">
    <property type="protein sequence ID" value="ABM76480.1"/>
    <property type="molecule type" value="Genomic_DNA"/>
</dbReference>
<dbReference type="RefSeq" id="WP_011824456.1">
    <property type="nucleotide sequence ID" value="NC_008819.1"/>
</dbReference>
<dbReference type="SMR" id="A2C4S0"/>
<dbReference type="KEGG" id="pme:NATL1_19241"/>
<dbReference type="eggNOG" id="COG0831">
    <property type="taxonomic scope" value="Bacteria"/>
</dbReference>
<dbReference type="HOGENOM" id="CLU_145825_1_0_3"/>
<dbReference type="UniPathway" id="UPA00258">
    <property type="reaction ID" value="UER00370"/>
</dbReference>
<dbReference type="Proteomes" id="UP000002592">
    <property type="component" value="Chromosome"/>
</dbReference>
<dbReference type="GO" id="GO:0005737">
    <property type="term" value="C:cytoplasm"/>
    <property type="evidence" value="ECO:0007669"/>
    <property type="project" value="UniProtKB-SubCell"/>
</dbReference>
<dbReference type="GO" id="GO:0016151">
    <property type="term" value="F:nickel cation binding"/>
    <property type="evidence" value="ECO:0007669"/>
    <property type="project" value="InterPro"/>
</dbReference>
<dbReference type="GO" id="GO:0009039">
    <property type="term" value="F:urease activity"/>
    <property type="evidence" value="ECO:0007669"/>
    <property type="project" value="UniProtKB-UniRule"/>
</dbReference>
<dbReference type="GO" id="GO:0043419">
    <property type="term" value="P:urea catabolic process"/>
    <property type="evidence" value="ECO:0007669"/>
    <property type="project" value="UniProtKB-UniRule"/>
</dbReference>
<dbReference type="CDD" id="cd00390">
    <property type="entry name" value="Urease_gamma"/>
    <property type="match status" value="1"/>
</dbReference>
<dbReference type="Gene3D" id="3.30.280.10">
    <property type="entry name" value="Urease, gamma-like subunit"/>
    <property type="match status" value="1"/>
</dbReference>
<dbReference type="HAMAP" id="MF_00739">
    <property type="entry name" value="Urease_gamma"/>
    <property type="match status" value="1"/>
</dbReference>
<dbReference type="InterPro" id="IPR012010">
    <property type="entry name" value="Urease_gamma"/>
</dbReference>
<dbReference type="InterPro" id="IPR002026">
    <property type="entry name" value="Urease_gamma/gamma-beta_su"/>
</dbReference>
<dbReference type="InterPro" id="IPR036463">
    <property type="entry name" value="Urease_gamma_sf"/>
</dbReference>
<dbReference type="InterPro" id="IPR050069">
    <property type="entry name" value="Urease_subunit"/>
</dbReference>
<dbReference type="NCBIfam" id="NF009712">
    <property type="entry name" value="PRK13241.1"/>
    <property type="match status" value="1"/>
</dbReference>
<dbReference type="NCBIfam" id="TIGR00193">
    <property type="entry name" value="urease_gam"/>
    <property type="match status" value="1"/>
</dbReference>
<dbReference type="PANTHER" id="PTHR33569">
    <property type="entry name" value="UREASE"/>
    <property type="match status" value="1"/>
</dbReference>
<dbReference type="PANTHER" id="PTHR33569:SF1">
    <property type="entry name" value="UREASE"/>
    <property type="match status" value="1"/>
</dbReference>
<dbReference type="Pfam" id="PF00547">
    <property type="entry name" value="Urease_gamma"/>
    <property type="match status" value="1"/>
</dbReference>
<dbReference type="PIRSF" id="PIRSF001223">
    <property type="entry name" value="Urease_gamma"/>
    <property type="match status" value="1"/>
</dbReference>
<dbReference type="SUPFAM" id="SSF54111">
    <property type="entry name" value="Urease, gamma-subunit"/>
    <property type="match status" value="1"/>
</dbReference>
<protein>
    <recommendedName>
        <fullName evidence="1">Urease subunit gamma</fullName>
        <ecNumber evidence="1">3.5.1.5</ecNumber>
    </recommendedName>
    <alternativeName>
        <fullName evidence="1">Urea amidohydrolase subunit gamma</fullName>
    </alternativeName>
</protein>
<evidence type="ECO:0000255" key="1">
    <source>
        <dbReference type="HAMAP-Rule" id="MF_00739"/>
    </source>
</evidence>
<proteinExistence type="inferred from homology"/>
<accession>A2C4S0</accession>